<organism>
    <name type="scientific">Buchnera aphidicola subsp. Schizaphis graminum (strain Sg)</name>
    <dbReference type="NCBI Taxonomy" id="198804"/>
    <lineage>
        <taxon>Bacteria</taxon>
        <taxon>Pseudomonadati</taxon>
        <taxon>Pseudomonadota</taxon>
        <taxon>Gammaproteobacteria</taxon>
        <taxon>Enterobacterales</taxon>
        <taxon>Erwiniaceae</taxon>
        <taxon>Buchnera</taxon>
    </lineage>
</organism>
<accession>Q8KA53</accession>
<protein>
    <recommendedName>
        <fullName evidence="1">CCA-adding enzyme</fullName>
        <ecNumber evidence="1">2.7.7.72</ecNumber>
    </recommendedName>
    <alternativeName>
        <fullName evidence="1">CCA tRNA nucleotidyltransferase</fullName>
    </alternativeName>
    <alternativeName>
        <fullName evidence="1">tRNA CCA-pyrophosphorylase</fullName>
    </alternativeName>
    <alternativeName>
        <fullName evidence="1">tRNA adenylyl-/cytidylyl- transferase</fullName>
    </alternativeName>
    <alternativeName>
        <fullName evidence="1">tRNA nucleotidyltransferase</fullName>
    </alternativeName>
    <alternativeName>
        <fullName evidence="1">tRNA-NT</fullName>
    </alternativeName>
</protein>
<dbReference type="EC" id="2.7.7.72" evidence="1"/>
<dbReference type="EMBL" id="AE013218">
    <property type="protein sequence ID" value="AAM67629.1"/>
    <property type="molecule type" value="Genomic_DNA"/>
</dbReference>
<dbReference type="RefSeq" id="WP_011053595.1">
    <property type="nucleotide sequence ID" value="NC_004061.1"/>
</dbReference>
<dbReference type="SMR" id="Q8KA53"/>
<dbReference type="STRING" id="198804.BUsg_058"/>
<dbReference type="GeneID" id="93003525"/>
<dbReference type="KEGG" id="bas:BUsg_058"/>
<dbReference type="eggNOG" id="COG0617">
    <property type="taxonomic scope" value="Bacteria"/>
</dbReference>
<dbReference type="HOGENOM" id="CLU_015961_1_1_6"/>
<dbReference type="Proteomes" id="UP000000416">
    <property type="component" value="Chromosome"/>
</dbReference>
<dbReference type="GO" id="GO:0005524">
    <property type="term" value="F:ATP binding"/>
    <property type="evidence" value="ECO:0007669"/>
    <property type="project" value="UniProtKB-UniRule"/>
</dbReference>
<dbReference type="GO" id="GO:0004810">
    <property type="term" value="F:CCA tRNA nucleotidyltransferase activity"/>
    <property type="evidence" value="ECO:0007669"/>
    <property type="project" value="UniProtKB-UniRule"/>
</dbReference>
<dbReference type="GO" id="GO:0000287">
    <property type="term" value="F:magnesium ion binding"/>
    <property type="evidence" value="ECO:0007669"/>
    <property type="project" value="UniProtKB-UniRule"/>
</dbReference>
<dbReference type="GO" id="GO:0000049">
    <property type="term" value="F:tRNA binding"/>
    <property type="evidence" value="ECO:0007669"/>
    <property type="project" value="UniProtKB-UniRule"/>
</dbReference>
<dbReference type="GO" id="GO:0042245">
    <property type="term" value="P:RNA repair"/>
    <property type="evidence" value="ECO:0007669"/>
    <property type="project" value="UniProtKB-KW"/>
</dbReference>
<dbReference type="GO" id="GO:0001680">
    <property type="term" value="P:tRNA 3'-terminal CCA addition"/>
    <property type="evidence" value="ECO:0007669"/>
    <property type="project" value="UniProtKB-UniRule"/>
</dbReference>
<dbReference type="CDD" id="cd05398">
    <property type="entry name" value="NT_ClassII-CCAase"/>
    <property type="match status" value="1"/>
</dbReference>
<dbReference type="Gene3D" id="3.30.460.10">
    <property type="entry name" value="Beta Polymerase, domain 2"/>
    <property type="match status" value="1"/>
</dbReference>
<dbReference type="Gene3D" id="1.10.3090.10">
    <property type="entry name" value="cca-adding enzyme, domain 2"/>
    <property type="match status" value="1"/>
</dbReference>
<dbReference type="HAMAP" id="MF_01262">
    <property type="entry name" value="CCA_bact_type2"/>
    <property type="match status" value="1"/>
</dbReference>
<dbReference type="InterPro" id="IPR012006">
    <property type="entry name" value="CCA_bact"/>
</dbReference>
<dbReference type="InterPro" id="IPR043519">
    <property type="entry name" value="NT_sf"/>
</dbReference>
<dbReference type="InterPro" id="IPR002646">
    <property type="entry name" value="PolA_pol_head_dom"/>
</dbReference>
<dbReference type="InterPro" id="IPR032828">
    <property type="entry name" value="PolyA_RNA-bd"/>
</dbReference>
<dbReference type="InterPro" id="IPR050124">
    <property type="entry name" value="tRNA_CCA-adding_enzyme"/>
</dbReference>
<dbReference type="NCBIfam" id="NF009813">
    <property type="entry name" value="PRK13298.1"/>
    <property type="match status" value="1"/>
</dbReference>
<dbReference type="PANTHER" id="PTHR47545">
    <property type="entry name" value="MULTIFUNCTIONAL CCA PROTEIN"/>
    <property type="match status" value="1"/>
</dbReference>
<dbReference type="PANTHER" id="PTHR47545:SF1">
    <property type="entry name" value="MULTIFUNCTIONAL CCA PROTEIN"/>
    <property type="match status" value="1"/>
</dbReference>
<dbReference type="Pfam" id="PF01743">
    <property type="entry name" value="PolyA_pol"/>
    <property type="match status" value="1"/>
</dbReference>
<dbReference type="Pfam" id="PF12627">
    <property type="entry name" value="PolyA_pol_RNAbd"/>
    <property type="match status" value="1"/>
</dbReference>
<dbReference type="PIRSF" id="PIRSF000813">
    <property type="entry name" value="CCA_bact"/>
    <property type="match status" value="1"/>
</dbReference>
<dbReference type="SUPFAM" id="SSF81301">
    <property type="entry name" value="Nucleotidyltransferase"/>
    <property type="match status" value="1"/>
</dbReference>
<dbReference type="SUPFAM" id="SSF81891">
    <property type="entry name" value="Poly A polymerase C-terminal region-like"/>
    <property type="match status" value="1"/>
</dbReference>
<sequence>MKVYLVGGAVRDSLLNLPIKDRDWVIVGGTKEILLKKNFQQVGKDFPVFLHPETHEEYSLARKERKSGRGYTGFHTEFSSDVTLEEDLIRRDLTINAIAQDENGNYIDPFQGRKDLNLRLLRHVSESFTEDPLRILRTARFAANLMHLGFHIDKDTMILMCKMVKKNELLYLTKNRIWNETEKAFKTLNPHVYFQILHACKALNFIFPEIFFLYERRTFFSILFTNFYSISFLSIGLSKISTLTKDVSIRFSYLCQFLSEKIDFSSTKENYDDDSAKLVKKLCKRCNIPSHIEELAVLNTGFCVFLSSIHYQSSSNIIKMFSKIDAWRKPDRIYKLSFLCDFNLFYHQNKIDNSKLKTGFLKKCFFIIKDISVKKILNQGFKGYQIKNELNKLRVNKLKFWRMKKKCFFFKE</sequence>
<keyword id="KW-0067">ATP-binding</keyword>
<keyword id="KW-0460">Magnesium</keyword>
<keyword id="KW-0479">Metal-binding</keyword>
<keyword id="KW-0547">Nucleotide-binding</keyword>
<keyword id="KW-0548">Nucleotidyltransferase</keyword>
<keyword id="KW-0692">RNA repair</keyword>
<keyword id="KW-0694">RNA-binding</keyword>
<keyword id="KW-0808">Transferase</keyword>
<keyword id="KW-0819">tRNA processing</keyword>
<proteinExistence type="inferred from homology"/>
<evidence type="ECO:0000255" key="1">
    <source>
        <dbReference type="HAMAP-Rule" id="MF_01262"/>
    </source>
</evidence>
<name>CCA_BUCAP</name>
<feature type="chain" id="PRO_0000139018" description="CCA-adding enzyme">
    <location>
        <begin position="1"/>
        <end position="412"/>
    </location>
</feature>
<feature type="binding site" evidence="1">
    <location>
        <position position="8"/>
    </location>
    <ligand>
        <name>ATP</name>
        <dbReference type="ChEBI" id="CHEBI:30616"/>
    </ligand>
</feature>
<feature type="binding site" evidence="1">
    <location>
        <position position="8"/>
    </location>
    <ligand>
        <name>CTP</name>
        <dbReference type="ChEBI" id="CHEBI:37563"/>
    </ligand>
</feature>
<feature type="binding site" evidence="1">
    <location>
        <position position="11"/>
    </location>
    <ligand>
        <name>ATP</name>
        <dbReference type="ChEBI" id="CHEBI:30616"/>
    </ligand>
</feature>
<feature type="binding site" evidence="1">
    <location>
        <position position="11"/>
    </location>
    <ligand>
        <name>CTP</name>
        <dbReference type="ChEBI" id="CHEBI:37563"/>
    </ligand>
</feature>
<feature type="binding site" evidence="1">
    <location>
        <position position="21"/>
    </location>
    <ligand>
        <name>Mg(2+)</name>
        <dbReference type="ChEBI" id="CHEBI:18420"/>
    </ligand>
</feature>
<feature type="binding site" evidence="1">
    <location>
        <position position="23"/>
    </location>
    <ligand>
        <name>Mg(2+)</name>
        <dbReference type="ChEBI" id="CHEBI:18420"/>
    </ligand>
</feature>
<feature type="binding site" evidence="1">
    <location>
        <position position="91"/>
    </location>
    <ligand>
        <name>ATP</name>
        <dbReference type="ChEBI" id="CHEBI:30616"/>
    </ligand>
</feature>
<feature type="binding site" evidence="1">
    <location>
        <position position="91"/>
    </location>
    <ligand>
        <name>CTP</name>
        <dbReference type="ChEBI" id="CHEBI:37563"/>
    </ligand>
</feature>
<feature type="binding site" evidence="1">
    <location>
        <position position="137"/>
    </location>
    <ligand>
        <name>ATP</name>
        <dbReference type="ChEBI" id="CHEBI:30616"/>
    </ligand>
</feature>
<feature type="binding site" evidence="1">
    <location>
        <position position="137"/>
    </location>
    <ligand>
        <name>CTP</name>
        <dbReference type="ChEBI" id="CHEBI:37563"/>
    </ligand>
</feature>
<feature type="binding site" evidence="1">
    <location>
        <position position="140"/>
    </location>
    <ligand>
        <name>ATP</name>
        <dbReference type="ChEBI" id="CHEBI:30616"/>
    </ligand>
</feature>
<feature type="binding site" evidence="1">
    <location>
        <position position="140"/>
    </location>
    <ligand>
        <name>CTP</name>
        <dbReference type="ChEBI" id="CHEBI:37563"/>
    </ligand>
</feature>
<gene>
    <name evidence="1" type="primary">cca</name>
    <name type="ordered locus">BUsg_058</name>
</gene>
<reference key="1">
    <citation type="journal article" date="2002" name="Science">
        <title>50 million years of genomic stasis in endosymbiotic bacteria.</title>
        <authorList>
            <person name="Tamas I."/>
            <person name="Klasson L."/>
            <person name="Canbaeck B."/>
            <person name="Naeslund A.K."/>
            <person name="Eriksson A.-S."/>
            <person name="Wernegreen J.J."/>
            <person name="Sandstroem J.P."/>
            <person name="Moran N.A."/>
            <person name="Andersson S.G.E."/>
        </authorList>
    </citation>
    <scope>NUCLEOTIDE SEQUENCE [LARGE SCALE GENOMIC DNA]</scope>
    <source>
        <strain>Sg</strain>
    </source>
</reference>
<comment type="function">
    <text evidence="1">Catalyzes the addition and repair of the essential 3'-terminal CCA sequence in tRNAs without using a nucleic acid template. Adds these three nucleotides in the order of C, C, and A to the tRNA nucleotide-73, using CTP and ATP as substrates and producing inorganic pyrophosphate. tRNA 3'-terminal CCA addition is required both for tRNA processing and repair. Also involved in tRNA surveillance by mediating tandem CCA addition to generate a CCACCA at the 3' terminus of unstable tRNAs. While stable tRNAs receive only 3'-terminal CCA, unstable tRNAs are marked with CCACCA and rapidly degraded.</text>
</comment>
<comment type="catalytic activity">
    <reaction evidence="1">
        <text>a tRNA precursor + 2 CTP + ATP = a tRNA with a 3' CCA end + 3 diphosphate</text>
        <dbReference type="Rhea" id="RHEA:14433"/>
        <dbReference type="Rhea" id="RHEA-COMP:10465"/>
        <dbReference type="Rhea" id="RHEA-COMP:10468"/>
        <dbReference type="ChEBI" id="CHEBI:30616"/>
        <dbReference type="ChEBI" id="CHEBI:33019"/>
        <dbReference type="ChEBI" id="CHEBI:37563"/>
        <dbReference type="ChEBI" id="CHEBI:74896"/>
        <dbReference type="ChEBI" id="CHEBI:83071"/>
        <dbReference type="EC" id="2.7.7.72"/>
    </reaction>
</comment>
<comment type="catalytic activity">
    <reaction evidence="1">
        <text>a tRNA with a 3' CCA end + 2 CTP + ATP = a tRNA with a 3' CCACCA end + 3 diphosphate</text>
        <dbReference type="Rhea" id="RHEA:76235"/>
        <dbReference type="Rhea" id="RHEA-COMP:10468"/>
        <dbReference type="Rhea" id="RHEA-COMP:18655"/>
        <dbReference type="ChEBI" id="CHEBI:30616"/>
        <dbReference type="ChEBI" id="CHEBI:33019"/>
        <dbReference type="ChEBI" id="CHEBI:37563"/>
        <dbReference type="ChEBI" id="CHEBI:83071"/>
        <dbReference type="ChEBI" id="CHEBI:195187"/>
    </reaction>
    <physiologicalReaction direction="left-to-right" evidence="1">
        <dbReference type="Rhea" id="RHEA:76236"/>
    </physiologicalReaction>
</comment>
<comment type="cofactor">
    <cofactor evidence="1">
        <name>Mg(2+)</name>
        <dbReference type="ChEBI" id="CHEBI:18420"/>
    </cofactor>
</comment>
<comment type="miscellaneous">
    <text evidence="1">A single active site specifically recognizes both ATP and CTP and is responsible for their addition.</text>
</comment>
<comment type="similarity">
    <text evidence="1">Belongs to the tRNA nucleotidyltransferase/poly(A) polymerase family. Bacterial CCA-adding enzyme type 2 subfamily.</text>
</comment>